<protein>
    <recommendedName>
        <fullName>Uncharacterized protein MJ1551</fullName>
    </recommendedName>
</protein>
<proteinExistence type="predicted"/>
<feature type="chain" id="PRO_0000107405" description="Uncharacterized protein MJ1551">
    <location>
        <begin position="1"/>
        <end position="57"/>
    </location>
</feature>
<gene>
    <name type="ordered locus">MJ1551</name>
</gene>
<keyword id="KW-1185">Reference proteome</keyword>
<sequence length="57" mass="6515">MCSCNLYFNGELVMEDVMIVEKKGDKVIAIDLFGDKKEFVGEIKKIDLNENKIFIEG</sequence>
<name>Y1551_METJA</name>
<reference key="1">
    <citation type="journal article" date="1996" name="Science">
        <title>Complete genome sequence of the methanogenic archaeon, Methanococcus jannaschii.</title>
        <authorList>
            <person name="Bult C.J."/>
            <person name="White O."/>
            <person name="Olsen G.J."/>
            <person name="Zhou L."/>
            <person name="Fleischmann R.D."/>
            <person name="Sutton G.G."/>
            <person name="Blake J.A."/>
            <person name="FitzGerald L.M."/>
            <person name="Clayton R.A."/>
            <person name="Gocayne J.D."/>
            <person name="Kerlavage A.R."/>
            <person name="Dougherty B.A."/>
            <person name="Tomb J.-F."/>
            <person name="Adams M.D."/>
            <person name="Reich C.I."/>
            <person name="Overbeek R."/>
            <person name="Kirkness E.F."/>
            <person name="Weinstock K.G."/>
            <person name="Merrick J.M."/>
            <person name="Glodek A."/>
            <person name="Scott J.L."/>
            <person name="Geoghagen N.S.M."/>
            <person name="Weidman J.F."/>
            <person name="Fuhrmann J.L."/>
            <person name="Nguyen D."/>
            <person name="Utterback T.R."/>
            <person name="Kelley J.M."/>
            <person name="Peterson J.D."/>
            <person name="Sadow P.W."/>
            <person name="Hanna M.C."/>
            <person name="Cotton M.D."/>
            <person name="Roberts K.M."/>
            <person name="Hurst M.A."/>
            <person name="Kaine B.P."/>
            <person name="Borodovsky M."/>
            <person name="Klenk H.-P."/>
            <person name="Fraser C.M."/>
            <person name="Smith H.O."/>
            <person name="Woese C.R."/>
            <person name="Venter J.C."/>
        </authorList>
    </citation>
    <scope>NUCLEOTIDE SEQUENCE [LARGE SCALE GENOMIC DNA]</scope>
    <source>
        <strain>ATCC 43067 / DSM 2661 / JAL-1 / JCM 10045 / NBRC 100440</strain>
    </source>
</reference>
<organism>
    <name type="scientific">Methanocaldococcus jannaschii (strain ATCC 43067 / DSM 2661 / JAL-1 / JCM 10045 / NBRC 100440)</name>
    <name type="common">Methanococcus jannaschii</name>
    <dbReference type="NCBI Taxonomy" id="243232"/>
    <lineage>
        <taxon>Archaea</taxon>
        <taxon>Methanobacteriati</taxon>
        <taxon>Methanobacteriota</taxon>
        <taxon>Methanomada group</taxon>
        <taxon>Methanococci</taxon>
        <taxon>Methanococcales</taxon>
        <taxon>Methanocaldococcaceae</taxon>
        <taxon>Methanocaldococcus</taxon>
    </lineage>
</organism>
<dbReference type="EMBL" id="L77117">
    <property type="protein sequence ID" value="AAB99571.1"/>
    <property type="molecule type" value="Genomic_DNA"/>
</dbReference>
<dbReference type="PIR" id="F64493">
    <property type="entry name" value="F64493"/>
</dbReference>
<dbReference type="RefSeq" id="WP_010871075.1">
    <property type="nucleotide sequence ID" value="NC_000909.1"/>
</dbReference>
<dbReference type="SMR" id="Q58946"/>
<dbReference type="STRING" id="243232.MJ_1551"/>
<dbReference type="PaxDb" id="243232-MJ_1551"/>
<dbReference type="EnsemblBacteria" id="AAB99571">
    <property type="protein sequence ID" value="AAB99571"/>
    <property type="gene ID" value="MJ_1551"/>
</dbReference>
<dbReference type="GeneID" id="32160010"/>
<dbReference type="KEGG" id="mja:MJ_1551"/>
<dbReference type="eggNOG" id="arCOG04856">
    <property type="taxonomic scope" value="Archaea"/>
</dbReference>
<dbReference type="HOGENOM" id="CLU_200895_3_0_2"/>
<dbReference type="InParanoid" id="Q58946"/>
<dbReference type="OrthoDB" id="63425at2157"/>
<dbReference type="Proteomes" id="UP000000805">
    <property type="component" value="Chromosome"/>
</dbReference>
<dbReference type="InterPro" id="IPR019300">
    <property type="entry name" value="CooT"/>
</dbReference>
<dbReference type="Pfam" id="PF10133">
    <property type="entry name" value="CooT"/>
    <property type="match status" value="1"/>
</dbReference>
<accession>Q58946</accession>